<feature type="chain" id="PRO_0000187594" description="Uroporphyrinogen decarboxylase">
    <location>
        <begin position="1"/>
        <end position="334"/>
    </location>
</feature>
<feature type="binding site" evidence="1">
    <location>
        <begin position="22"/>
        <end position="26"/>
    </location>
    <ligand>
        <name>substrate</name>
    </ligand>
</feature>
<feature type="binding site" evidence="1">
    <location>
        <position position="71"/>
    </location>
    <ligand>
        <name>substrate</name>
    </ligand>
</feature>
<feature type="binding site" evidence="1">
    <location>
        <position position="140"/>
    </location>
    <ligand>
        <name>substrate</name>
    </ligand>
</feature>
<feature type="binding site" evidence="1">
    <location>
        <position position="195"/>
    </location>
    <ligand>
        <name>substrate</name>
    </ligand>
</feature>
<feature type="binding site" evidence="1">
    <location>
        <position position="310"/>
    </location>
    <ligand>
        <name>substrate</name>
    </ligand>
</feature>
<feature type="site" description="Transition state stabilizer" evidence="1">
    <location>
        <position position="71"/>
    </location>
</feature>
<protein>
    <recommendedName>
        <fullName evidence="1">Uroporphyrinogen decarboxylase</fullName>
        <shortName evidence="1">UPD</shortName>
        <shortName evidence="1">URO-D</shortName>
        <ecNumber evidence="1">4.1.1.37</ecNumber>
    </recommendedName>
</protein>
<keyword id="KW-0963">Cytoplasm</keyword>
<keyword id="KW-0210">Decarboxylase</keyword>
<keyword id="KW-0456">Lyase</keyword>
<keyword id="KW-0627">Porphyrin biosynthesis</keyword>
<comment type="function">
    <text evidence="1">Catalyzes the decarboxylation of four acetate groups of uroporphyrinogen-III to yield coproporphyrinogen-III.</text>
</comment>
<comment type="catalytic activity">
    <reaction evidence="1">
        <text>uroporphyrinogen III + 4 H(+) = coproporphyrinogen III + 4 CO2</text>
        <dbReference type="Rhea" id="RHEA:19865"/>
        <dbReference type="ChEBI" id="CHEBI:15378"/>
        <dbReference type="ChEBI" id="CHEBI:16526"/>
        <dbReference type="ChEBI" id="CHEBI:57308"/>
        <dbReference type="ChEBI" id="CHEBI:57309"/>
        <dbReference type="EC" id="4.1.1.37"/>
    </reaction>
</comment>
<comment type="pathway">
    <text evidence="1">Porphyrin-containing compound metabolism; protoporphyrin-IX biosynthesis; coproporphyrinogen-III from 5-aminolevulinate: step 4/4.</text>
</comment>
<comment type="subunit">
    <text evidence="1">Homodimer.</text>
</comment>
<comment type="subcellular location">
    <subcellularLocation>
        <location evidence="1">Cytoplasm</location>
    </subcellularLocation>
</comment>
<comment type="similarity">
    <text evidence="1">Belongs to the uroporphyrinogen decarboxylase family.</text>
</comment>
<evidence type="ECO:0000255" key="1">
    <source>
        <dbReference type="HAMAP-Rule" id="MF_00218"/>
    </source>
</evidence>
<gene>
    <name evidence="1" type="primary">hemE</name>
    <name type="ordered locus">TC_0123</name>
</gene>
<reference key="1">
    <citation type="journal article" date="2000" name="Nucleic Acids Res.">
        <title>Genome sequences of Chlamydia trachomatis MoPn and Chlamydia pneumoniae AR39.</title>
        <authorList>
            <person name="Read T.D."/>
            <person name="Brunham R.C."/>
            <person name="Shen C."/>
            <person name="Gill S.R."/>
            <person name="Heidelberg J.F."/>
            <person name="White O."/>
            <person name="Hickey E.K."/>
            <person name="Peterson J.D."/>
            <person name="Utterback T.R."/>
            <person name="Berry K.J."/>
            <person name="Bass S."/>
            <person name="Linher K.D."/>
            <person name="Weidman J.F."/>
            <person name="Khouri H.M."/>
            <person name="Craven B."/>
            <person name="Bowman C."/>
            <person name="Dodson R.J."/>
            <person name="Gwinn M.L."/>
            <person name="Nelson W.C."/>
            <person name="DeBoy R.T."/>
            <person name="Kolonay J.F."/>
            <person name="McClarty G."/>
            <person name="Salzberg S.L."/>
            <person name="Eisen J.A."/>
            <person name="Fraser C.M."/>
        </authorList>
    </citation>
    <scope>NUCLEOTIDE SEQUENCE [LARGE SCALE GENOMIC DNA]</scope>
    <source>
        <strain>MoPn / Nigg</strain>
    </source>
</reference>
<sequence length="334" mass="37380">MAGFYDIISPSNQHRPPVWLLRQVGRYMPQYQELKTNRPLKELFLDTESIIEATLLGPSLLGVDAAIVFTDILSILEGFAIEYRFAPGPEIIYSPHQPFVFTEDPFSTFSFLIEAIQKLTKRLTVPLIAFAASPFTLASYLIEGGASKDCSKTIAFLYQYPDKFEALLNEIIKGTAIYLQLQVQAGASAVQLFESSSLRLPPSLFSKYVVSPNAKLIRLIKQRENPPVSLFCRCFYQEFLSLYATGADTLHPDYHVELSEIYRQLGDPGSIQGNFDPALLLLPQDLLIAHLETYLAPLKQQSHYIFNLGHGILPQTPLENVQAVVKCLTSISTS</sequence>
<proteinExistence type="inferred from homology"/>
<organism>
    <name type="scientific">Chlamydia muridarum (strain MoPn / Nigg)</name>
    <dbReference type="NCBI Taxonomy" id="243161"/>
    <lineage>
        <taxon>Bacteria</taxon>
        <taxon>Pseudomonadati</taxon>
        <taxon>Chlamydiota</taxon>
        <taxon>Chlamydiia</taxon>
        <taxon>Chlamydiales</taxon>
        <taxon>Chlamydiaceae</taxon>
        <taxon>Chlamydia/Chlamydophila group</taxon>
        <taxon>Chlamydia</taxon>
    </lineage>
</organism>
<name>DCUP_CHLMU</name>
<dbReference type="EC" id="4.1.1.37" evidence="1"/>
<dbReference type="EMBL" id="AE002160">
    <property type="protein sequence ID" value="AAF39001.1"/>
    <property type="molecule type" value="Genomic_DNA"/>
</dbReference>
<dbReference type="PIR" id="F81739">
    <property type="entry name" value="F81739"/>
</dbReference>
<dbReference type="RefSeq" id="WP_010229446.1">
    <property type="nucleotide sequence ID" value="NZ_CP063055.1"/>
</dbReference>
<dbReference type="SMR" id="Q9PLH7"/>
<dbReference type="GeneID" id="1245657"/>
<dbReference type="KEGG" id="cmu:TC_0123"/>
<dbReference type="eggNOG" id="COG0407">
    <property type="taxonomic scope" value="Bacteria"/>
</dbReference>
<dbReference type="HOGENOM" id="CLU_040933_0_0_0"/>
<dbReference type="OrthoDB" id="9806656at2"/>
<dbReference type="UniPathway" id="UPA00251">
    <property type="reaction ID" value="UER00321"/>
</dbReference>
<dbReference type="Proteomes" id="UP000000800">
    <property type="component" value="Chromosome"/>
</dbReference>
<dbReference type="GO" id="GO:0005829">
    <property type="term" value="C:cytosol"/>
    <property type="evidence" value="ECO:0007669"/>
    <property type="project" value="TreeGrafter"/>
</dbReference>
<dbReference type="GO" id="GO:0004853">
    <property type="term" value="F:uroporphyrinogen decarboxylase activity"/>
    <property type="evidence" value="ECO:0007669"/>
    <property type="project" value="UniProtKB-UniRule"/>
</dbReference>
<dbReference type="GO" id="GO:0006782">
    <property type="term" value="P:protoporphyrinogen IX biosynthetic process"/>
    <property type="evidence" value="ECO:0007669"/>
    <property type="project" value="UniProtKB-UniRule"/>
</dbReference>
<dbReference type="Gene3D" id="3.20.20.210">
    <property type="match status" value="1"/>
</dbReference>
<dbReference type="HAMAP" id="MF_00218">
    <property type="entry name" value="URO_D"/>
    <property type="match status" value="1"/>
</dbReference>
<dbReference type="InterPro" id="IPR038071">
    <property type="entry name" value="UROD/MetE-like_sf"/>
</dbReference>
<dbReference type="InterPro" id="IPR006361">
    <property type="entry name" value="Uroporphyrinogen_deCO2ase_HemE"/>
</dbReference>
<dbReference type="InterPro" id="IPR000257">
    <property type="entry name" value="Uroporphyrinogen_deCOase"/>
</dbReference>
<dbReference type="NCBIfam" id="TIGR01464">
    <property type="entry name" value="hemE"/>
    <property type="match status" value="1"/>
</dbReference>
<dbReference type="PANTHER" id="PTHR21091">
    <property type="entry name" value="METHYLTETRAHYDROFOLATE:HOMOCYSTEINE METHYLTRANSFERASE RELATED"/>
    <property type="match status" value="1"/>
</dbReference>
<dbReference type="PANTHER" id="PTHR21091:SF169">
    <property type="entry name" value="UROPORPHYRINOGEN DECARBOXYLASE"/>
    <property type="match status" value="1"/>
</dbReference>
<dbReference type="Pfam" id="PF01208">
    <property type="entry name" value="URO-D"/>
    <property type="match status" value="1"/>
</dbReference>
<dbReference type="SUPFAM" id="SSF51726">
    <property type="entry name" value="UROD/MetE-like"/>
    <property type="match status" value="1"/>
</dbReference>
<dbReference type="PROSITE" id="PS00906">
    <property type="entry name" value="UROD_1"/>
    <property type="match status" value="1"/>
</dbReference>
<dbReference type="PROSITE" id="PS00907">
    <property type="entry name" value="UROD_2"/>
    <property type="match status" value="1"/>
</dbReference>
<accession>Q9PLH7</accession>